<evidence type="ECO:0000255" key="1">
    <source>
        <dbReference type="HAMAP-Rule" id="MF_00480"/>
    </source>
</evidence>
<evidence type="ECO:0000305" key="2"/>
<gene>
    <name evidence="1" type="primary">rpsG</name>
    <name type="ordered locus">HPSH_06185</name>
</gene>
<feature type="chain" id="PRO_1000125955" description="Small ribosomal subunit protein uS7">
    <location>
        <begin position="1"/>
        <end position="155"/>
    </location>
</feature>
<protein>
    <recommendedName>
        <fullName evidence="1">Small ribosomal subunit protein uS7</fullName>
    </recommendedName>
    <alternativeName>
        <fullName evidence="2">30S ribosomal protein S7</fullName>
    </alternativeName>
</protein>
<accession>B2UUV7</accession>
<name>RS7_HELPS</name>
<organism>
    <name type="scientific">Helicobacter pylori (strain Shi470)</name>
    <dbReference type="NCBI Taxonomy" id="512562"/>
    <lineage>
        <taxon>Bacteria</taxon>
        <taxon>Pseudomonadati</taxon>
        <taxon>Campylobacterota</taxon>
        <taxon>Epsilonproteobacteria</taxon>
        <taxon>Campylobacterales</taxon>
        <taxon>Helicobacteraceae</taxon>
        <taxon>Helicobacter</taxon>
    </lineage>
</organism>
<dbReference type="EMBL" id="CP001072">
    <property type="protein sequence ID" value="ACD48639.1"/>
    <property type="molecule type" value="Genomic_DNA"/>
</dbReference>
<dbReference type="RefSeq" id="WP_001254365.1">
    <property type="nucleotide sequence ID" value="NC_010698.2"/>
</dbReference>
<dbReference type="SMR" id="B2UUV7"/>
<dbReference type="GeneID" id="93237676"/>
<dbReference type="KEGG" id="hps:HPSH_06185"/>
<dbReference type="HOGENOM" id="CLU_072226_1_1_7"/>
<dbReference type="GO" id="GO:0015935">
    <property type="term" value="C:small ribosomal subunit"/>
    <property type="evidence" value="ECO:0007669"/>
    <property type="project" value="InterPro"/>
</dbReference>
<dbReference type="GO" id="GO:0019843">
    <property type="term" value="F:rRNA binding"/>
    <property type="evidence" value="ECO:0007669"/>
    <property type="project" value="UniProtKB-UniRule"/>
</dbReference>
<dbReference type="GO" id="GO:0003735">
    <property type="term" value="F:structural constituent of ribosome"/>
    <property type="evidence" value="ECO:0007669"/>
    <property type="project" value="InterPro"/>
</dbReference>
<dbReference type="GO" id="GO:0000049">
    <property type="term" value="F:tRNA binding"/>
    <property type="evidence" value="ECO:0007669"/>
    <property type="project" value="UniProtKB-UniRule"/>
</dbReference>
<dbReference type="GO" id="GO:0006412">
    <property type="term" value="P:translation"/>
    <property type="evidence" value="ECO:0007669"/>
    <property type="project" value="UniProtKB-UniRule"/>
</dbReference>
<dbReference type="CDD" id="cd14869">
    <property type="entry name" value="uS7_Bacteria"/>
    <property type="match status" value="1"/>
</dbReference>
<dbReference type="FunFam" id="1.10.455.10:FF:000001">
    <property type="entry name" value="30S ribosomal protein S7"/>
    <property type="match status" value="1"/>
</dbReference>
<dbReference type="Gene3D" id="1.10.455.10">
    <property type="entry name" value="Ribosomal protein S7 domain"/>
    <property type="match status" value="1"/>
</dbReference>
<dbReference type="HAMAP" id="MF_00480_B">
    <property type="entry name" value="Ribosomal_uS7_B"/>
    <property type="match status" value="1"/>
</dbReference>
<dbReference type="InterPro" id="IPR000235">
    <property type="entry name" value="Ribosomal_uS7"/>
</dbReference>
<dbReference type="InterPro" id="IPR005717">
    <property type="entry name" value="Ribosomal_uS7_bac/org-type"/>
</dbReference>
<dbReference type="InterPro" id="IPR020606">
    <property type="entry name" value="Ribosomal_uS7_CS"/>
</dbReference>
<dbReference type="InterPro" id="IPR023798">
    <property type="entry name" value="Ribosomal_uS7_dom"/>
</dbReference>
<dbReference type="InterPro" id="IPR036823">
    <property type="entry name" value="Ribosomal_uS7_dom_sf"/>
</dbReference>
<dbReference type="NCBIfam" id="TIGR01029">
    <property type="entry name" value="rpsG_bact"/>
    <property type="match status" value="1"/>
</dbReference>
<dbReference type="PANTHER" id="PTHR11205">
    <property type="entry name" value="RIBOSOMAL PROTEIN S7"/>
    <property type="match status" value="1"/>
</dbReference>
<dbReference type="Pfam" id="PF00177">
    <property type="entry name" value="Ribosomal_S7"/>
    <property type="match status" value="1"/>
</dbReference>
<dbReference type="PIRSF" id="PIRSF002122">
    <property type="entry name" value="RPS7p_RPS7a_RPS5e_RPS7o"/>
    <property type="match status" value="1"/>
</dbReference>
<dbReference type="SUPFAM" id="SSF47973">
    <property type="entry name" value="Ribosomal protein S7"/>
    <property type="match status" value="1"/>
</dbReference>
<dbReference type="PROSITE" id="PS00052">
    <property type="entry name" value="RIBOSOMAL_S7"/>
    <property type="match status" value="1"/>
</dbReference>
<sequence length="155" mass="17987">MRRRKAPVREVLGDPVYGNKVVTKFINKMMYDGKKSVAEKIIYKAFNKIEEKSGEKGIEVFEKALERVRPLVEVRSRRVGGATYQVPVEVRASRQQSLSIRWILEATRKRNERMMVDRLANELMDAASDKGAAFKKKEDVHKMAEANKAFAHYRW</sequence>
<keyword id="KW-0687">Ribonucleoprotein</keyword>
<keyword id="KW-0689">Ribosomal protein</keyword>
<keyword id="KW-0694">RNA-binding</keyword>
<keyword id="KW-0699">rRNA-binding</keyword>
<keyword id="KW-0820">tRNA-binding</keyword>
<reference key="1">
    <citation type="submission" date="2008-05" db="EMBL/GenBank/DDBJ databases">
        <title>Genome sequence of Helicobacter pylori from the remote Amazon: traces of Asian ancestry of the first Americans.</title>
        <authorList>
            <person name="Kersulyte D."/>
            <person name="Kalia A."/>
            <person name="Gilman R.H."/>
            <person name="Berg D.E."/>
        </authorList>
    </citation>
    <scope>NUCLEOTIDE SEQUENCE [LARGE SCALE GENOMIC DNA]</scope>
    <source>
        <strain>Shi470</strain>
    </source>
</reference>
<comment type="function">
    <text evidence="1">One of the primary rRNA binding proteins, it binds directly to 16S rRNA where it nucleates assembly of the head domain of the 30S subunit. Is located at the subunit interface close to the decoding center, probably blocks exit of the E-site tRNA.</text>
</comment>
<comment type="subunit">
    <text evidence="1">Part of the 30S ribosomal subunit. Contacts proteins S9 and S11.</text>
</comment>
<comment type="similarity">
    <text evidence="1">Belongs to the universal ribosomal protein uS7 family.</text>
</comment>
<proteinExistence type="inferred from homology"/>